<feature type="chain" id="PRO_0000303848" description="Xaa-Pro dipeptidase 2">
    <location>
        <begin position="1"/>
        <end position="438"/>
    </location>
</feature>
<feature type="binding site" evidence="1">
    <location>
        <position position="242"/>
    </location>
    <ligand>
        <name>Mn(2+)</name>
        <dbReference type="ChEBI" id="CHEBI:29035"/>
        <label>2</label>
    </ligand>
</feature>
<feature type="binding site" evidence="1">
    <location>
        <position position="253"/>
    </location>
    <ligand>
        <name>Mn(2+)</name>
        <dbReference type="ChEBI" id="CHEBI:29035"/>
        <label>1</label>
    </ligand>
</feature>
<feature type="binding site" evidence="1">
    <location>
        <position position="253"/>
    </location>
    <ligand>
        <name>Mn(2+)</name>
        <dbReference type="ChEBI" id="CHEBI:29035"/>
        <label>2</label>
    </ligand>
</feature>
<feature type="binding site" evidence="1">
    <location>
        <position position="333"/>
    </location>
    <ligand>
        <name>Mn(2+)</name>
        <dbReference type="ChEBI" id="CHEBI:29035"/>
        <label>1</label>
    </ligand>
</feature>
<feature type="binding site" evidence="1">
    <location>
        <position position="378"/>
    </location>
    <ligand>
        <name>Mn(2+)</name>
        <dbReference type="ChEBI" id="CHEBI:29035"/>
        <label>1</label>
    </ligand>
</feature>
<feature type="binding site" evidence="1">
    <location>
        <position position="414"/>
    </location>
    <ligand>
        <name>Mn(2+)</name>
        <dbReference type="ChEBI" id="CHEBI:29035"/>
        <label>1</label>
    </ligand>
</feature>
<feature type="binding site" evidence="1">
    <location>
        <position position="414"/>
    </location>
    <ligand>
        <name>Mn(2+)</name>
        <dbReference type="ChEBI" id="CHEBI:29035"/>
        <label>2</label>
    </ligand>
</feature>
<accession>Q5QVP2</accession>
<dbReference type="EC" id="3.4.13.9" evidence="1"/>
<dbReference type="EMBL" id="AE017340">
    <property type="protein sequence ID" value="AAV83071.1"/>
    <property type="molecule type" value="Genomic_DNA"/>
</dbReference>
<dbReference type="RefSeq" id="WP_011235466.1">
    <property type="nucleotide sequence ID" value="NC_006512.1"/>
</dbReference>
<dbReference type="SMR" id="Q5QVP2"/>
<dbReference type="STRING" id="283942.IL2239"/>
<dbReference type="GeneID" id="41337428"/>
<dbReference type="KEGG" id="ilo:IL2239"/>
<dbReference type="eggNOG" id="COG0006">
    <property type="taxonomic scope" value="Bacteria"/>
</dbReference>
<dbReference type="HOGENOM" id="CLU_050675_0_0_6"/>
<dbReference type="OrthoDB" id="9806388at2"/>
<dbReference type="Proteomes" id="UP000001171">
    <property type="component" value="Chromosome"/>
</dbReference>
<dbReference type="GO" id="GO:0005829">
    <property type="term" value="C:cytosol"/>
    <property type="evidence" value="ECO:0007669"/>
    <property type="project" value="TreeGrafter"/>
</dbReference>
<dbReference type="GO" id="GO:0004177">
    <property type="term" value="F:aminopeptidase activity"/>
    <property type="evidence" value="ECO:0007669"/>
    <property type="project" value="TreeGrafter"/>
</dbReference>
<dbReference type="GO" id="GO:0046872">
    <property type="term" value="F:metal ion binding"/>
    <property type="evidence" value="ECO:0007669"/>
    <property type="project" value="UniProtKB-KW"/>
</dbReference>
<dbReference type="GO" id="GO:0008235">
    <property type="term" value="F:metalloexopeptidase activity"/>
    <property type="evidence" value="ECO:0007669"/>
    <property type="project" value="UniProtKB-UniRule"/>
</dbReference>
<dbReference type="GO" id="GO:0016795">
    <property type="term" value="F:phosphoric triester hydrolase activity"/>
    <property type="evidence" value="ECO:0007669"/>
    <property type="project" value="InterPro"/>
</dbReference>
<dbReference type="GO" id="GO:0102009">
    <property type="term" value="F:proline dipeptidase activity"/>
    <property type="evidence" value="ECO:0007669"/>
    <property type="project" value="UniProtKB-EC"/>
</dbReference>
<dbReference type="GO" id="GO:0006508">
    <property type="term" value="P:proteolysis"/>
    <property type="evidence" value="ECO:0007669"/>
    <property type="project" value="UniProtKB-KW"/>
</dbReference>
<dbReference type="Gene3D" id="3.90.230.10">
    <property type="entry name" value="Creatinase/methionine aminopeptidase superfamily"/>
    <property type="match status" value="1"/>
</dbReference>
<dbReference type="Gene3D" id="3.40.350.10">
    <property type="entry name" value="Creatinase/prolidase N-terminal domain"/>
    <property type="match status" value="1"/>
</dbReference>
<dbReference type="HAMAP" id="MF_01279">
    <property type="entry name" value="X_Pro_dipeptid"/>
    <property type="match status" value="1"/>
</dbReference>
<dbReference type="InterPro" id="IPR029149">
    <property type="entry name" value="Creatin/AminoP/Spt16_N"/>
</dbReference>
<dbReference type="InterPro" id="IPR036005">
    <property type="entry name" value="Creatinase/aminopeptidase-like"/>
</dbReference>
<dbReference type="InterPro" id="IPR048819">
    <property type="entry name" value="PepQ_N"/>
</dbReference>
<dbReference type="InterPro" id="IPR000994">
    <property type="entry name" value="Pept_M24"/>
</dbReference>
<dbReference type="InterPro" id="IPR001131">
    <property type="entry name" value="Peptidase_M24B_aminopep-P_CS"/>
</dbReference>
<dbReference type="InterPro" id="IPR052433">
    <property type="entry name" value="X-Pro_dipept-like"/>
</dbReference>
<dbReference type="InterPro" id="IPR022846">
    <property type="entry name" value="X_Pro_dipept"/>
</dbReference>
<dbReference type="NCBIfam" id="NF010133">
    <property type="entry name" value="PRK13607.1"/>
    <property type="match status" value="1"/>
</dbReference>
<dbReference type="PANTHER" id="PTHR43226">
    <property type="entry name" value="XAA-PRO AMINOPEPTIDASE 3"/>
    <property type="match status" value="1"/>
</dbReference>
<dbReference type="PANTHER" id="PTHR43226:SF8">
    <property type="entry name" value="XAA-PRO DIPEPTIDASE"/>
    <property type="match status" value="1"/>
</dbReference>
<dbReference type="Pfam" id="PF21216">
    <property type="entry name" value="PepQ_N"/>
    <property type="match status" value="1"/>
</dbReference>
<dbReference type="Pfam" id="PF00557">
    <property type="entry name" value="Peptidase_M24"/>
    <property type="match status" value="1"/>
</dbReference>
<dbReference type="SUPFAM" id="SSF55920">
    <property type="entry name" value="Creatinase/aminopeptidase"/>
    <property type="match status" value="1"/>
</dbReference>
<dbReference type="PROSITE" id="PS00491">
    <property type="entry name" value="PROLINE_PEPTIDASE"/>
    <property type="match status" value="1"/>
</dbReference>
<name>PEPQ2_IDILO</name>
<comment type="function">
    <text evidence="1">Splits dipeptides with a prolyl residue in the C-terminal position.</text>
</comment>
<comment type="catalytic activity">
    <reaction evidence="1">
        <text>Xaa-L-Pro dipeptide + H2O = an L-alpha-amino acid + L-proline</text>
        <dbReference type="Rhea" id="RHEA:76407"/>
        <dbReference type="ChEBI" id="CHEBI:15377"/>
        <dbReference type="ChEBI" id="CHEBI:59869"/>
        <dbReference type="ChEBI" id="CHEBI:60039"/>
        <dbReference type="ChEBI" id="CHEBI:195196"/>
        <dbReference type="EC" id="3.4.13.9"/>
    </reaction>
</comment>
<comment type="cofactor">
    <cofactor evidence="1">
        <name>Mn(2+)</name>
        <dbReference type="ChEBI" id="CHEBI:29035"/>
    </cofactor>
    <text evidence="1">Binds 2 manganese ions per subunit.</text>
</comment>
<comment type="similarity">
    <text evidence="1">Belongs to the peptidase M24B family. Bacterial-type prolidase subfamily.</text>
</comment>
<organism>
    <name type="scientific">Idiomarina loihiensis (strain ATCC BAA-735 / DSM 15497 / L2-TR)</name>
    <dbReference type="NCBI Taxonomy" id="283942"/>
    <lineage>
        <taxon>Bacteria</taxon>
        <taxon>Pseudomonadati</taxon>
        <taxon>Pseudomonadota</taxon>
        <taxon>Gammaproteobacteria</taxon>
        <taxon>Alteromonadales</taxon>
        <taxon>Idiomarinaceae</taxon>
        <taxon>Idiomarina</taxon>
    </lineage>
</organism>
<sequence>MSAYAEHIKTVCSRFDKALEDNNFESVLVYSGQPRVDFLDDNAPPYRVNPLFKYWVPVTESPKSAIFYRKGSQRPTVYLFQARDFWHAPVNVPEEEWQQHVDLKIIDDLSMLTEDLGSDLEQSAFIGEDFAQPVSDWRVKARNPQALIDHLHFHRSIKTQWEVDNLREANRLAAKAHVAAKEAFFAGKSELEIHHAYLGAIDFRESQVPYNSIVALNSHSAILHYDVYDTVPPKQIRSFLIDAGARYRGYCSDITRSYAYEEGFYANLVEAMDKAQQELLSEIKPGVSYYDLHVSMHLKVAQILSDFEFIKGDAQSIYDKGYTSAFMPHGLGHFIGLQVHDVGGFLKDDKGNSYERSERHPFLRLLRDIEVGHVFTIEPGLYVVDQLLEEHKDSADINWEKVDELRPYGGVRIEDSIVVGADGNENLTRDAFKELGAE</sequence>
<keyword id="KW-0224">Dipeptidase</keyword>
<keyword id="KW-0378">Hydrolase</keyword>
<keyword id="KW-0464">Manganese</keyword>
<keyword id="KW-0479">Metal-binding</keyword>
<keyword id="KW-0482">Metalloprotease</keyword>
<keyword id="KW-0645">Protease</keyword>
<keyword id="KW-1185">Reference proteome</keyword>
<reference key="1">
    <citation type="journal article" date="2004" name="Proc. Natl. Acad. Sci. U.S.A.">
        <title>Genome sequence of the deep-sea gamma-proteobacterium Idiomarina loihiensis reveals amino acid fermentation as a source of carbon and energy.</title>
        <authorList>
            <person name="Hou S."/>
            <person name="Saw J.H."/>
            <person name="Lee K.S."/>
            <person name="Freitas T.A."/>
            <person name="Belisle C."/>
            <person name="Kawarabayasi Y."/>
            <person name="Donachie S.P."/>
            <person name="Pikina A."/>
            <person name="Galperin M.Y."/>
            <person name="Koonin E.V."/>
            <person name="Makarova K.S."/>
            <person name="Omelchenko M.V."/>
            <person name="Sorokin A."/>
            <person name="Wolf Y.I."/>
            <person name="Li Q.X."/>
            <person name="Keum Y.S."/>
            <person name="Campbell S."/>
            <person name="Denery J."/>
            <person name="Aizawa S."/>
            <person name="Shibata S."/>
            <person name="Malahoff A."/>
            <person name="Alam M."/>
        </authorList>
    </citation>
    <scope>NUCLEOTIDE SEQUENCE [LARGE SCALE GENOMIC DNA]</scope>
    <source>
        <strain>ATCC BAA-735 / DSM 15497 / L2-TR</strain>
    </source>
</reference>
<gene>
    <name evidence="1" type="primary">pepQ2</name>
    <name type="ordered locus">IL2239</name>
</gene>
<protein>
    <recommendedName>
        <fullName evidence="1">Xaa-Pro dipeptidase 2</fullName>
        <shortName evidence="1">X-Pro dipeptidase 2</shortName>
        <ecNumber evidence="1">3.4.13.9</ecNumber>
    </recommendedName>
    <alternativeName>
        <fullName evidence="1">Imidodipeptidase 2</fullName>
    </alternativeName>
    <alternativeName>
        <fullName evidence="1">Proline dipeptidase 2</fullName>
        <shortName evidence="1">Prolidase 2</shortName>
    </alternativeName>
</protein>
<proteinExistence type="inferred from homology"/>
<evidence type="ECO:0000255" key="1">
    <source>
        <dbReference type="HAMAP-Rule" id="MF_01279"/>
    </source>
</evidence>